<organism>
    <name type="scientific">Cupriavidus taiwanensis (strain DSM 17343 / BCRC 17206 / CCUG 44338 / CIP 107171 / LMG 19424 / R1)</name>
    <name type="common">Ralstonia taiwanensis (strain LMG 19424)</name>
    <dbReference type="NCBI Taxonomy" id="977880"/>
    <lineage>
        <taxon>Bacteria</taxon>
        <taxon>Pseudomonadati</taxon>
        <taxon>Pseudomonadota</taxon>
        <taxon>Betaproteobacteria</taxon>
        <taxon>Burkholderiales</taxon>
        <taxon>Burkholderiaceae</taxon>
        <taxon>Cupriavidus</taxon>
    </lineage>
</organism>
<reference key="1">
    <citation type="journal article" date="2008" name="Genome Res.">
        <title>Genome sequence of the beta-rhizobium Cupriavidus taiwanensis and comparative genomics of rhizobia.</title>
        <authorList>
            <person name="Amadou C."/>
            <person name="Pascal G."/>
            <person name="Mangenot S."/>
            <person name="Glew M."/>
            <person name="Bontemps C."/>
            <person name="Capela D."/>
            <person name="Carrere S."/>
            <person name="Cruveiller S."/>
            <person name="Dossat C."/>
            <person name="Lajus A."/>
            <person name="Marchetti M."/>
            <person name="Poinsot V."/>
            <person name="Rouy Z."/>
            <person name="Servin B."/>
            <person name="Saad M."/>
            <person name="Schenowitz C."/>
            <person name="Barbe V."/>
            <person name="Batut J."/>
            <person name="Medigue C."/>
            <person name="Masson-Boivin C."/>
        </authorList>
    </citation>
    <scope>NUCLEOTIDE SEQUENCE [LARGE SCALE GENOMIC DNA]</scope>
    <source>
        <strain>DSM 17343 / BCRC 17206 / CCUG 44338 / CIP 107171 / LMG 19424 / R1</strain>
    </source>
</reference>
<name>RS4_CUPTR</name>
<proteinExistence type="inferred from homology"/>
<evidence type="ECO:0000255" key="1">
    <source>
        <dbReference type="HAMAP-Rule" id="MF_01306"/>
    </source>
</evidence>
<evidence type="ECO:0000256" key="2">
    <source>
        <dbReference type="SAM" id="MobiDB-lite"/>
    </source>
</evidence>
<evidence type="ECO:0000305" key="3"/>
<accession>B3R7E4</accession>
<keyword id="KW-0687">Ribonucleoprotein</keyword>
<keyword id="KW-0689">Ribosomal protein</keyword>
<keyword id="KW-0694">RNA-binding</keyword>
<keyword id="KW-0699">rRNA-binding</keyword>
<sequence length="207" mass="23321">MARYTGPKAKLSRREGTDLFLKSSRRSLADKCKLDSKPGQHGRTSGARTSDYGNQLREKQKVKRIYGVLERQFRRYFAEADRRKGNTGENLLQLLESRLDNVVYRMGFGSTRAEARQLVSHKAILVNGQTLNVPSAQIKSGDVITIREQSKKQVRIAEALSLAEQSGFPTWVAVDAKKFEGTFKQVPDRADISGDINESLIVELYSR</sequence>
<protein>
    <recommendedName>
        <fullName evidence="1">Small ribosomal subunit protein uS4</fullName>
    </recommendedName>
    <alternativeName>
        <fullName evidence="3">30S ribosomal protein S4</fullName>
    </alternativeName>
</protein>
<gene>
    <name evidence="1" type="primary">rpsD</name>
    <name type="ordered locus">RALTA_A2919</name>
</gene>
<feature type="chain" id="PRO_1000140714" description="Small ribosomal subunit protein uS4">
    <location>
        <begin position="1"/>
        <end position="207"/>
    </location>
</feature>
<feature type="domain" description="S4 RNA-binding" evidence="1">
    <location>
        <begin position="97"/>
        <end position="160"/>
    </location>
</feature>
<feature type="region of interest" description="Disordered" evidence="2">
    <location>
        <begin position="30"/>
        <end position="54"/>
    </location>
</feature>
<feature type="compositionally biased region" description="Polar residues" evidence="2">
    <location>
        <begin position="42"/>
        <end position="53"/>
    </location>
</feature>
<dbReference type="EMBL" id="CU633749">
    <property type="protein sequence ID" value="CAQ70844.1"/>
    <property type="molecule type" value="Genomic_DNA"/>
</dbReference>
<dbReference type="RefSeq" id="WP_012354133.1">
    <property type="nucleotide sequence ID" value="NC_010528.1"/>
</dbReference>
<dbReference type="SMR" id="B3R7E4"/>
<dbReference type="GeneID" id="29762162"/>
<dbReference type="KEGG" id="cti:RALTA_A2919"/>
<dbReference type="eggNOG" id="COG0522">
    <property type="taxonomic scope" value="Bacteria"/>
</dbReference>
<dbReference type="HOGENOM" id="CLU_092403_0_2_4"/>
<dbReference type="BioCyc" id="CTAI977880:RALTA_RS14230-MONOMER"/>
<dbReference type="Proteomes" id="UP000001692">
    <property type="component" value="Chromosome 1"/>
</dbReference>
<dbReference type="GO" id="GO:0015935">
    <property type="term" value="C:small ribosomal subunit"/>
    <property type="evidence" value="ECO:0007669"/>
    <property type="project" value="InterPro"/>
</dbReference>
<dbReference type="GO" id="GO:0019843">
    <property type="term" value="F:rRNA binding"/>
    <property type="evidence" value="ECO:0007669"/>
    <property type="project" value="UniProtKB-UniRule"/>
</dbReference>
<dbReference type="GO" id="GO:0003735">
    <property type="term" value="F:structural constituent of ribosome"/>
    <property type="evidence" value="ECO:0007669"/>
    <property type="project" value="InterPro"/>
</dbReference>
<dbReference type="GO" id="GO:0042274">
    <property type="term" value="P:ribosomal small subunit biogenesis"/>
    <property type="evidence" value="ECO:0007669"/>
    <property type="project" value="TreeGrafter"/>
</dbReference>
<dbReference type="GO" id="GO:0006412">
    <property type="term" value="P:translation"/>
    <property type="evidence" value="ECO:0007669"/>
    <property type="project" value="UniProtKB-UniRule"/>
</dbReference>
<dbReference type="CDD" id="cd00165">
    <property type="entry name" value="S4"/>
    <property type="match status" value="1"/>
</dbReference>
<dbReference type="FunFam" id="1.10.1050.10:FF:000001">
    <property type="entry name" value="30S ribosomal protein S4"/>
    <property type="match status" value="1"/>
</dbReference>
<dbReference type="FunFam" id="3.10.290.10:FF:000001">
    <property type="entry name" value="30S ribosomal protein S4"/>
    <property type="match status" value="1"/>
</dbReference>
<dbReference type="Gene3D" id="1.10.1050.10">
    <property type="entry name" value="Ribosomal Protein S4 Delta 41, Chain A, domain 1"/>
    <property type="match status" value="1"/>
</dbReference>
<dbReference type="Gene3D" id="3.10.290.10">
    <property type="entry name" value="RNA-binding S4 domain"/>
    <property type="match status" value="1"/>
</dbReference>
<dbReference type="HAMAP" id="MF_01306_B">
    <property type="entry name" value="Ribosomal_uS4_B"/>
    <property type="match status" value="1"/>
</dbReference>
<dbReference type="InterPro" id="IPR022801">
    <property type="entry name" value="Ribosomal_uS4"/>
</dbReference>
<dbReference type="InterPro" id="IPR005709">
    <property type="entry name" value="Ribosomal_uS4_bac-type"/>
</dbReference>
<dbReference type="InterPro" id="IPR018079">
    <property type="entry name" value="Ribosomal_uS4_CS"/>
</dbReference>
<dbReference type="InterPro" id="IPR001912">
    <property type="entry name" value="Ribosomal_uS4_N"/>
</dbReference>
<dbReference type="InterPro" id="IPR002942">
    <property type="entry name" value="S4_RNA-bd"/>
</dbReference>
<dbReference type="InterPro" id="IPR036986">
    <property type="entry name" value="S4_RNA-bd_sf"/>
</dbReference>
<dbReference type="NCBIfam" id="NF003717">
    <property type="entry name" value="PRK05327.1"/>
    <property type="match status" value="1"/>
</dbReference>
<dbReference type="NCBIfam" id="TIGR01017">
    <property type="entry name" value="rpsD_bact"/>
    <property type="match status" value="1"/>
</dbReference>
<dbReference type="PANTHER" id="PTHR11831">
    <property type="entry name" value="30S 40S RIBOSOMAL PROTEIN"/>
    <property type="match status" value="1"/>
</dbReference>
<dbReference type="PANTHER" id="PTHR11831:SF4">
    <property type="entry name" value="SMALL RIBOSOMAL SUBUNIT PROTEIN US4M"/>
    <property type="match status" value="1"/>
</dbReference>
<dbReference type="Pfam" id="PF00163">
    <property type="entry name" value="Ribosomal_S4"/>
    <property type="match status" value="1"/>
</dbReference>
<dbReference type="Pfam" id="PF01479">
    <property type="entry name" value="S4"/>
    <property type="match status" value="1"/>
</dbReference>
<dbReference type="SMART" id="SM01390">
    <property type="entry name" value="Ribosomal_S4"/>
    <property type="match status" value="1"/>
</dbReference>
<dbReference type="SMART" id="SM00363">
    <property type="entry name" value="S4"/>
    <property type="match status" value="1"/>
</dbReference>
<dbReference type="SUPFAM" id="SSF55174">
    <property type="entry name" value="Alpha-L RNA-binding motif"/>
    <property type="match status" value="1"/>
</dbReference>
<dbReference type="PROSITE" id="PS00632">
    <property type="entry name" value="RIBOSOMAL_S4"/>
    <property type="match status" value="1"/>
</dbReference>
<dbReference type="PROSITE" id="PS50889">
    <property type="entry name" value="S4"/>
    <property type="match status" value="1"/>
</dbReference>
<comment type="function">
    <text evidence="1">One of the primary rRNA binding proteins, it binds directly to 16S rRNA where it nucleates assembly of the body of the 30S subunit.</text>
</comment>
<comment type="function">
    <text evidence="1">With S5 and S12 plays an important role in translational accuracy.</text>
</comment>
<comment type="subunit">
    <text evidence="1">Part of the 30S ribosomal subunit. Contacts protein S5. The interaction surface between S4 and S5 is involved in control of translational fidelity.</text>
</comment>
<comment type="similarity">
    <text evidence="1">Belongs to the universal ribosomal protein uS4 family.</text>
</comment>